<keyword id="KW-0937">Abscisic acid biosynthesis</keyword>
<keyword id="KW-0150">Chloroplast</keyword>
<keyword id="KW-0223">Dioxygenase</keyword>
<keyword id="KW-0408">Iron</keyword>
<keyword id="KW-0479">Metal-binding</keyword>
<keyword id="KW-0560">Oxidoreductase</keyword>
<keyword id="KW-0934">Plastid</keyword>
<keyword id="KW-1185">Reference proteome</keyword>
<keyword id="KW-0809">Transit peptide</keyword>
<protein>
    <recommendedName>
        <fullName>9-cis-epoxycarotenoid dioxygenase NCED9, chloroplastic</fullName>
        <shortName>AtNCED9</shortName>
        <ecNumber>1.13.11.51</ecNumber>
    </recommendedName>
</protein>
<gene>
    <name type="primary">NCED9</name>
    <name type="ordered locus">At1g78390</name>
    <name type="ORF">F3F9.10</name>
</gene>
<name>NCED9_ARATH</name>
<feature type="transit peptide" description="Chloroplast" evidence="2">
    <location>
        <begin position="1"/>
        <end status="unknown"/>
    </location>
</feature>
<feature type="chain" id="PRO_0000285998" description="9-cis-epoxycarotenoid dioxygenase NCED9, chloroplastic">
    <location>
        <begin status="unknown"/>
        <end position="657"/>
    </location>
</feature>
<feature type="binding site" evidence="1">
    <location>
        <position position="357"/>
    </location>
    <ligand>
        <name>Fe cation</name>
        <dbReference type="ChEBI" id="CHEBI:24875"/>
    </ligand>
</feature>
<feature type="binding site" evidence="1">
    <location>
        <position position="406"/>
    </location>
    <ligand>
        <name>Fe cation</name>
        <dbReference type="ChEBI" id="CHEBI:24875"/>
    </ligand>
</feature>
<feature type="binding site" evidence="1">
    <location>
        <position position="471"/>
    </location>
    <ligand>
        <name>Fe cation</name>
        <dbReference type="ChEBI" id="CHEBI:24875"/>
    </ligand>
</feature>
<feature type="binding site" evidence="1">
    <location>
        <position position="642"/>
    </location>
    <ligand>
        <name>Fe cation</name>
        <dbReference type="ChEBI" id="CHEBI:24875"/>
    </ligand>
</feature>
<comment type="function">
    <text evidence="3 5">Has a 11,12(11',12') 9-cis epoxycarotenoid cleavage activity. Catalyzes the first step of abscisic-acid biosynthesis from carotenoids. Contributes probably to abscisic acid synthesis for the induction of seed dormancy.</text>
</comment>
<comment type="catalytic activity">
    <reaction>
        <text>a 9-cis-epoxycarotenoid + O2 = a 12'-apo-carotenal + 2-cis,4-trans-xanthoxin</text>
        <dbReference type="Rhea" id="RHEA:23328"/>
        <dbReference type="ChEBI" id="CHEBI:15379"/>
        <dbReference type="ChEBI" id="CHEBI:32304"/>
        <dbReference type="ChEBI" id="CHEBI:51972"/>
        <dbReference type="ChEBI" id="CHEBI:51973"/>
        <dbReference type="EC" id="1.13.11.51"/>
    </reaction>
</comment>
<comment type="catalytic activity">
    <reaction>
        <text>9-cis-violaxanthin + O2 = (3S,5R,6S)-5,6-epoxy-3-hydroxy-5,6-dihydro-12'-apo-beta-caroten-12'-al + 2-cis,4-trans-xanthoxin</text>
        <dbReference type="Rhea" id="RHEA:16541"/>
        <dbReference type="ChEBI" id="CHEBI:15379"/>
        <dbReference type="ChEBI" id="CHEBI:32304"/>
        <dbReference type="ChEBI" id="CHEBI:34597"/>
        <dbReference type="ChEBI" id="CHEBI:35305"/>
        <dbReference type="EC" id="1.13.11.51"/>
    </reaction>
</comment>
<comment type="catalytic activity">
    <reaction>
        <text>9'-cis-neoxanthin + O2 = (3S,5R,6R)-3,5-dihydroxy-6,7-didehydro-5,6-dihydro-12'-apo-beta-caroten-12'-al + 2-cis,4-trans-xanthoxin</text>
        <dbReference type="Rhea" id="RHEA:19677"/>
        <dbReference type="ChEBI" id="CHEBI:15379"/>
        <dbReference type="ChEBI" id="CHEBI:32304"/>
        <dbReference type="ChEBI" id="CHEBI:34596"/>
        <dbReference type="ChEBI" id="CHEBI:35306"/>
        <dbReference type="EC" id="1.13.11.51"/>
    </reaction>
</comment>
<comment type="cofactor">
    <cofactor evidence="1">
        <name>Fe(2+)</name>
        <dbReference type="ChEBI" id="CHEBI:29033"/>
    </cofactor>
    <text evidence="1">Binds 1 Fe(2+) ion per subunit.</text>
</comment>
<comment type="subcellular location">
    <subcellularLocation>
        <location evidence="4">Plastid</location>
        <location evidence="4">Chloroplast stroma</location>
    </subcellularLocation>
</comment>
<comment type="tissue specificity">
    <text evidence="4 5">Expressed in developing siliques, embryo and endosperm.</text>
</comment>
<comment type="developmental stage">
    <text evidence="5">Expressed in seeds at early and mid-maturation stages.</text>
</comment>
<comment type="induction">
    <text evidence="3 4">Low induction by drought stress.</text>
</comment>
<comment type="disruption phenotype">
    <text evidence="5">Plants exhibit abscisic-acid-deficient phenotypes in seeds, but not in vegetative tissues.</text>
</comment>
<comment type="similarity">
    <text evidence="6">Belongs to the carotenoid oxygenase family.</text>
</comment>
<dbReference type="EC" id="1.13.11.51"/>
<dbReference type="EMBL" id="AC013430">
    <property type="protein sequence ID" value="AAF71797.1"/>
    <property type="molecule type" value="Genomic_DNA"/>
</dbReference>
<dbReference type="EMBL" id="CP002684">
    <property type="protein sequence ID" value="AEE36100.1"/>
    <property type="molecule type" value="Genomic_DNA"/>
</dbReference>
<dbReference type="PIR" id="E96812">
    <property type="entry name" value="E96812"/>
</dbReference>
<dbReference type="RefSeq" id="NP_177960.1">
    <property type="nucleotide sequence ID" value="NM_106486.3"/>
</dbReference>
<dbReference type="SMR" id="Q9M9F5"/>
<dbReference type="FunCoup" id="Q9M9F5">
    <property type="interactions" value="28"/>
</dbReference>
<dbReference type="STRING" id="3702.Q9M9F5"/>
<dbReference type="PaxDb" id="3702-AT1G78390.1"/>
<dbReference type="ProteomicsDB" id="251205"/>
<dbReference type="EnsemblPlants" id="AT1G78390.1">
    <property type="protein sequence ID" value="AT1G78390.1"/>
    <property type="gene ID" value="AT1G78390"/>
</dbReference>
<dbReference type="GeneID" id="844175"/>
<dbReference type="Gramene" id="AT1G78390.1">
    <property type="protein sequence ID" value="AT1G78390.1"/>
    <property type="gene ID" value="AT1G78390"/>
</dbReference>
<dbReference type="KEGG" id="ath:AT1G78390"/>
<dbReference type="Araport" id="AT1G78390"/>
<dbReference type="TAIR" id="AT1G78390">
    <property type="gene designation" value="NCED9"/>
</dbReference>
<dbReference type="eggNOG" id="KOG1285">
    <property type="taxonomic scope" value="Eukaryota"/>
</dbReference>
<dbReference type="HOGENOM" id="CLU_016472_0_0_1"/>
<dbReference type="InParanoid" id="Q9M9F5"/>
<dbReference type="OMA" id="PWLAFIH"/>
<dbReference type="PhylomeDB" id="Q9M9F5"/>
<dbReference type="BioCyc" id="MetaCyc:AT1G78390-MONOMER"/>
<dbReference type="BRENDA" id="1.13.11.51">
    <property type="organism ID" value="399"/>
</dbReference>
<dbReference type="PRO" id="PR:Q9M9F5"/>
<dbReference type="Proteomes" id="UP000006548">
    <property type="component" value="Chromosome 1"/>
</dbReference>
<dbReference type="ExpressionAtlas" id="Q9M9F5">
    <property type="expression patterns" value="baseline and differential"/>
</dbReference>
<dbReference type="GO" id="GO:0009570">
    <property type="term" value="C:chloroplast stroma"/>
    <property type="evidence" value="ECO:0000314"/>
    <property type="project" value="TAIR"/>
</dbReference>
<dbReference type="GO" id="GO:0045549">
    <property type="term" value="F:9-cis-epoxycarotenoid dioxygenase activity"/>
    <property type="evidence" value="ECO:0000314"/>
    <property type="project" value="TAIR"/>
</dbReference>
<dbReference type="GO" id="GO:0046872">
    <property type="term" value="F:metal ion binding"/>
    <property type="evidence" value="ECO:0007669"/>
    <property type="project" value="UniProtKB-KW"/>
</dbReference>
<dbReference type="GO" id="GO:0009688">
    <property type="term" value="P:abscisic acid biosynthetic process"/>
    <property type="evidence" value="ECO:0000304"/>
    <property type="project" value="TAIR"/>
</dbReference>
<dbReference type="GO" id="GO:0010162">
    <property type="term" value="P:seed dormancy process"/>
    <property type="evidence" value="ECO:0000316"/>
    <property type="project" value="TAIR"/>
</dbReference>
<dbReference type="InterPro" id="IPR004294">
    <property type="entry name" value="Carotenoid_Oase"/>
</dbReference>
<dbReference type="PANTHER" id="PTHR10543:SF95">
    <property type="entry name" value="9-CIS-EPOXYCAROTENOID DIOXYGENASE NCED9, CHLOROPLASTIC"/>
    <property type="match status" value="1"/>
</dbReference>
<dbReference type="PANTHER" id="PTHR10543">
    <property type="entry name" value="BETA-CAROTENE DIOXYGENASE"/>
    <property type="match status" value="1"/>
</dbReference>
<dbReference type="Pfam" id="PF03055">
    <property type="entry name" value="RPE65"/>
    <property type="match status" value="1"/>
</dbReference>
<proteinExistence type="evidence at transcript level"/>
<organism>
    <name type="scientific">Arabidopsis thaliana</name>
    <name type="common">Mouse-ear cress</name>
    <dbReference type="NCBI Taxonomy" id="3702"/>
    <lineage>
        <taxon>Eukaryota</taxon>
        <taxon>Viridiplantae</taxon>
        <taxon>Streptophyta</taxon>
        <taxon>Embryophyta</taxon>
        <taxon>Tracheophyta</taxon>
        <taxon>Spermatophyta</taxon>
        <taxon>Magnoliopsida</taxon>
        <taxon>eudicotyledons</taxon>
        <taxon>Gunneridae</taxon>
        <taxon>Pentapetalae</taxon>
        <taxon>rosids</taxon>
        <taxon>malvids</taxon>
        <taxon>Brassicales</taxon>
        <taxon>Brassicaceae</taxon>
        <taxon>Camelineae</taxon>
        <taxon>Arabidopsis</taxon>
    </lineage>
</organism>
<evidence type="ECO:0000250" key="1">
    <source>
        <dbReference type="UniProtKB" id="O24592"/>
    </source>
</evidence>
<evidence type="ECO:0000255" key="2"/>
<evidence type="ECO:0000269" key="3">
    <source>
    </source>
</evidence>
<evidence type="ECO:0000269" key="4">
    <source>
    </source>
</evidence>
<evidence type="ECO:0000269" key="5">
    <source>
    </source>
</evidence>
<evidence type="ECO:0000305" key="6"/>
<accession>Q9M9F5</accession>
<reference key="1">
    <citation type="journal article" date="2000" name="Nature">
        <title>Sequence and analysis of chromosome 1 of the plant Arabidopsis thaliana.</title>
        <authorList>
            <person name="Theologis A."/>
            <person name="Ecker J.R."/>
            <person name="Palm C.J."/>
            <person name="Federspiel N.A."/>
            <person name="Kaul S."/>
            <person name="White O."/>
            <person name="Alonso J."/>
            <person name="Altafi H."/>
            <person name="Araujo R."/>
            <person name="Bowman C.L."/>
            <person name="Brooks S.Y."/>
            <person name="Buehler E."/>
            <person name="Chan A."/>
            <person name="Chao Q."/>
            <person name="Chen H."/>
            <person name="Cheuk R.F."/>
            <person name="Chin C.W."/>
            <person name="Chung M.K."/>
            <person name="Conn L."/>
            <person name="Conway A.B."/>
            <person name="Conway A.R."/>
            <person name="Creasy T.H."/>
            <person name="Dewar K."/>
            <person name="Dunn P."/>
            <person name="Etgu P."/>
            <person name="Feldblyum T.V."/>
            <person name="Feng J.-D."/>
            <person name="Fong B."/>
            <person name="Fujii C.Y."/>
            <person name="Gill J.E."/>
            <person name="Goldsmith A.D."/>
            <person name="Haas B."/>
            <person name="Hansen N.F."/>
            <person name="Hughes B."/>
            <person name="Huizar L."/>
            <person name="Hunter J.L."/>
            <person name="Jenkins J."/>
            <person name="Johnson-Hopson C."/>
            <person name="Khan S."/>
            <person name="Khaykin E."/>
            <person name="Kim C.J."/>
            <person name="Koo H.L."/>
            <person name="Kremenetskaia I."/>
            <person name="Kurtz D.B."/>
            <person name="Kwan A."/>
            <person name="Lam B."/>
            <person name="Langin-Hooper S."/>
            <person name="Lee A."/>
            <person name="Lee J.M."/>
            <person name="Lenz C.A."/>
            <person name="Li J.H."/>
            <person name="Li Y.-P."/>
            <person name="Lin X."/>
            <person name="Liu S.X."/>
            <person name="Liu Z.A."/>
            <person name="Luros J.S."/>
            <person name="Maiti R."/>
            <person name="Marziali A."/>
            <person name="Militscher J."/>
            <person name="Miranda M."/>
            <person name="Nguyen M."/>
            <person name="Nierman W.C."/>
            <person name="Osborne B.I."/>
            <person name="Pai G."/>
            <person name="Peterson J."/>
            <person name="Pham P.K."/>
            <person name="Rizzo M."/>
            <person name="Rooney T."/>
            <person name="Rowley D."/>
            <person name="Sakano H."/>
            <person name="Salzberg S.L."/>
            <person name="Schwartz J.R."/>
            <person name="Shinn P."/>
            <person name="Southwick A.M."/>
            <person name="Sun H."/>
            <person name="Tallon L.J."/>
            <person name="Tambunga G."/>
            <person name="Toriumi M.J."/>
            <person name="Town C.D."/>
            <person name="Utterback T."/>
            <person name="Van Aken S."/>
            <person name="Vaysberg M."/>
            <person name="Vysotskaia V.S."/>
            <person name="Walker M."/>
            <person name="Wu D."/>
            <person name="Yu G."/>
            <person name="Fraser C.M."/>
            <person name="Venter J.C."/>
            <person name="Davis R.W."/>
        </authorList>
    </citation>
    <scope>NUCLEOTIDE SEQUENCE [LARGE SCALE GENOMIC DNA]</scope>
    <source>
        <strain>cv. Columbia</strain>
    </source>
</reference>
<reference key="2">
    <citation type="journal article" date="2017" name="Plant J.">
        <title>Araport11: a complete reannotation of the Arabidopsis thaliana reference genome.</title>
        <authorList>
            <person name="Cheng C.Y."/>
            <person name="Krishnakumar V."/>
            <person name="Chan A.P."/>
            <person name="Thibaud-Nissen F."/>
            <person name="Schobel S."/>
            <person name="Town C.D."/>
        </authorList>
    </citation>
    <scope>GENOME REANNOTATION</scope>
    <source>
        <strain>cv. Columbia</strain>
    </source>
</reference>
<reference key="3">
    <citation type="journal article" date="2001" name="Plant J.">
        <title>Regulation of drought tolerance by gene manipulation of 9-cis-epoxycarotenoid dioxygenase, a key enzyme in abscisic acid biosynthesis in Arabidopsis.</title>
        <authorList>
            <person name="Iuchi S."/>
            <person name="Kobayashi M."/>
            <person name="Taji T."/>
            <person name="Naramoto M."/>
            <person name="Seki M."/>
            <person name="Kato T."/>
            <person name="Tabata S."/>
            <person name="Kakubari Y."/>
            <person name="Yamaguchi-Shinozaki K."/>
            <person name="Shinozaki K."/>
        </authorList>
    </citation>
    <scope>FUNCTION</scope>
    <scope>INDUCTION BY DROUGHT STRESS</scope>
</reference>
<reference key="4">
    <citation type="journal article" date="2003" name="Plant J.">
        <title>Molecular characterization of the Arabidopsis 9-cis epoxycarotenoid dioxygenase gene family.</title>
        <authorList>
            <person name="Tan B.-C."/>
            <person name="Joseph L.M."/>
            <person name="Deng W.-T."/>
            <person name="Liu L."/>
            <person name="Li Q.-B."/>
            <person name="Cline K."/>
            <person name="McCarty D.R."/>
        </authorList>
    </citation>
    <scope>SUBCELLULAR LOCATION</scope>
    <scope>TISSUE SPECIFICITY</scope>
    <scope>INDUCTION BY DROUGHT STRESS</scope>
</reference>
<reference key="5">
    <citation type="journal article" date="2006" name="Plant J.">
        <title>Functional analysis of Arabidopsis NCED6 and NCED9 genes indicates that ABA synthesized in the endosperm is involved in the induction of seed dormancy.</title>
        <authorList>
            <person name="Lefebvre V."/>
            <person name="North H."/>
            <person name="Frey A."/>
            <person name="Sotta B."/>
            <person name="Seo M."/>
            <person name="Okamoto M."/>
            <person name="Nambara E."/>
            <person name="Marion-Poll A."/>
        </authorList>
    </citation>
    <scope>FUNCTION</scope>
    <scope>DEVELOPMENTAL STAGE</scope>
    <scope>TISSUE SPECIFICITY</scope>
    <scope>DISRUPTION PHENOTYPE</scope>
</reference>
<sequence length="657" mass="73015">MTIITIISGMYIYSLLSQDAHHSQYGQNTNLVLKKPIPKPQTAAFNQESTMASTTLLPSTSTQFLDRTFSTSSSSSRPKLQSLSFSSTLRNKKLVVPCYVSSSVNKKSSVSSSLQSPTFKPPSWKKLCNDVTNLIPKTTNQNPKLNPVQRTAAMVLDAVENAMISHERRRHPHPKTADPAVQIAGNFFPVPEKPVVHNLPVTGTVPECIQGVYVRNGANPLHKPVSGHHLFDGDGMVHAVRFDNGSVSYACRFTETNRLVQERECGRPVFPKAIGELHGHLGIAKLMLFNTRGLFGLVDPTGGLGVANAGLVYFNGHLLAMSEDDLPYHVKVTQTGDLETSGRYDFDGQLKSTMIAHPKIDPETRELFALSYDVVSKPYLKYFRFTSDGEKSPDVEIPLDQPTMIHDFAITENFVVIPDQQVVFRLPEMIRGGSPVVYDEKKKSRFGILNKNAKDASSIQWIEVPDCFCFHLWNSWEEPETDEVVVIGSCMTPPDSIFNEHDETLQSVLSEIRLNLKTGESTRRPVISEQVNLEAGMVNRNLLGRKTRYAYLALTEPWPKVSGFAKVDLSTGEIRKYIYGEGKYGGEPLFLPSGDGEEDGGYIMVFVHDEEKVKSELQLINAVNMKLEATVTLPSRVPYGFHGTFISKEDLSKQALC</sequence>